<organism>
    <name type="scientific">Thioalkalivibrio sulfidiphilus (strain HL-EbGR7)</name>
    <dbReference type="NCBI Taxonomy" id="396588"/>
    <lineage>
        <taxon>Bacteria</taxon>
        <taxon>Pseudomonadati</taxon>
        <taxon>Pseudomonadota</taxon>
        <taxon>Gammaproteobacteria</taxon>
        <taxon>Chromatiales</taxon>
        <taxon>Ectothiorhodospiraceae</taxon>
        <taxon>Thioalkalivibrio</taxon>
    </lineage>
</organism>
<reference key="1">
    <citation type="journal article" date="2011" name="Stand. Genomic Sci.">
        <title>Complete genome sequence of 'Thioalkalivibrio sulfidophilus' HL-EbGr7.</title>
        <authorList>
            <person name="Muyzer G."/>
            <person name="Sorokin D.Y."/>
            <person name="Mavromatis K."/>
            <person name="Lapidus A."/>
            <person name="Clum A."/>
            <person name="Ivanova N."/>
            <person name="Pati A."/>
            <person name="d'Haeseleer P."/>
            <person name="Woyke T."/>
            <person name="Kyrpides N.C."/>
        </authorList>
    </citation>
    <scope>NUCLEOTIDE SEQUENCE [LARGE SCALE GENOMIC DNA]</scope>
    <source>
        <strain>HL-EbGR7</strain>
    </source>
</reference>
<evidence type="ECO:0000255" key="1">
    <source>
        <dbReference type="HAMAP-Rule" id="MF_00558"/>
    </source>
</evidence>
<gene>
    <name evidence="1" type="primary">sucC</name>
    <name type="ordered locus">Tgr7_0808</name>
</gene>
<comment type="function">
    <text evidence="1">Succinyl-CoA synthetase functions in the citric acid cycle (TCA), coupling the hydrolysis of succinyl-CoA to the synthesis of either ATP or GTP and thus represents the only step of substrate-level phosphorylation in the TCA. The beta subunit provides nucleotide specificity of the enzyme and binds the substrate succinate, while the binding sites for coenzyme A and phosphate are found in the alpha subunit.</text>
</comment>
<comment type="catalytic activity">
    <reaction evidence="1">
        <text>succinate + ATP + CoA = succinyl-CoA + ADP + phosphate</text>
        <dbReference type="Rhea" id="RHEA:17661"/>
        <dbReference type="ChEBI" id="CHEBI:30031"/>
        <dbReference type="ChEBI" id="CHEBI:30616"/>
        <dbReference type="ChEBI" id="CHEBI:43474"/>
        <dbReference type="ChEBI" id="CHEBI:57287"/>
        <dbReference type="ChEBI" id="CHEBI:57292"/>
        <dbReference type="ChEBI" id="CHEBI:456216"/>
        <dbReference type="EC" id="6.2.1.5"/>
    </reaction>
    <physiologicalReaction direction="right-to-left" evidence="1">
        <dbReference type="Rhea" id="RHEA:17663"/>
    </physiologicalReaction>
</comment>
<comment type="catalytic activity">
    <reaction evidence="1">
        <text>GTP + succinate + CoA = succinyl-CoA + GDP + phosphate</text>
        <dbReference type="Rhea" id="RHEA:22120"/>
        <dbReference type="ChEBI" id="CHEBI:30031"/>
        <dbReference type="ChEBI" id="CHEBI:37565"/>
        <dbReference type="ChEBI" id="CHEBI:43474"/>
        <dbReference type="ChEBI" id="CHEBI:57287"/>
        <dbReference type="ChEBI" id="CHEBI:57292"/>
        <dbReference type="ChEBI" id="CHEBI:58189"/>
    </reaction>
    <physiologicalReaction direction="right-to-left" evidence="1">
        <dbReference type="Rhea" id="RHEA:22122"/>
    </physiologicalReaction>
</comment>
<comment type="cofactor">
    <cofactor evidence="1">
        <name>Mg(2+)</name>
        <dbReference type="ChEBI" id="CHEBI:18420"/>
    </cofactor>
    <text evidence="1">Binds 1 Mg(2+) ion per subunit.</text>
</comment>
<comment type="pathway">
    <text evidence="1">Carbohydrate metabolism; tricarboxylic acid cycle; succinate from succinyl-CoA (ligase route): step 1/1.</text>
</comment>
<comment type="subunit">
    <text evidence="1">Heterotetramer of two alpha and two beta subunits.</text>
</comment>
<comment type="similarity">
    <text evidence="1">Belongs to the succinate/malate CoA ligase beta subunit family.</text>
</comment>
<keyword id="KW-0067">ATP-binding</keyword>
<keyword id="KW-0436">Ligase</keyword>
<keyword id="KW-0460">Magnesium</keyword>
<keyword id="KW-0479">Metal-binding</keyword>
<keyword id="KW-0547">Nucleotide-binding</keyword>
<keyword id="KW-1185">Reference proteome</keyword>
<keyword id="KW-0816">Tricarboxylic acid cycle</keyword>
<proteinExistence type="inferred from homology"/>
<protein>
    <recommendedName>
        <fullName evidence="1">Succinate--CoA ligase [ADP-forming] subunit beta</fullName>
        <ecNumber evidence="1">6.2.1.5</ecNumber>
    </recommendedName>
    <alternativeName>
        <fullName evidence="1">Succinyl-CoA synthetase subunit beta</fullName>
        <shortName evidence="1">SCS-beta</shortName>
    </alternativeName>
</protein>
<accession>B8GN38</accession>
<name>SUCC_THISH</name>
<sequence>MNLHEFQAKALFREHGIPVPEGVAVSDPAALGEAISSLGGDAWVVKAQVHAGGRGKAGGVRLVKGSRELEHAVGELLGGRLATHQTGPAGLPINTVLVESLTDIGRELYLSLLVDRARRRVAIMASAAGGMDIETVAAESPEKIITLHVDPAAGYMPYQGRRVAFALGLEGPQVSALVKLLGQLYRLFVDSDASLVEINPLVVTKTGELIALDAKINLDDNGLYRHQALAELRDETQEDAREARAREHELNYVRLDGNIGCMVNGAGLAMATMDLIKLHGGEPANFLDVGGGTTAARVAEAFKLILSDEAVKAVFVNIFGGIVRCDLIAEGIINAVKEVHVTVPVVVRLEGTNVDQGKQMLAESGLNIITAESLTDGARRVVASVQ</sequence>
<dbReference type="EC" id="6.2.1.5" evidence="1"/>
<dbReference type="EMBL" id="CP001339">
    <property type="protein sequence ID" value="ACL71899.1"/>
    <property type="molecule type" value="Genomic_DNA"/>
</dbReference>
<dbReference type="RefSeq" id="WP_012637387.1">
    <property type="nucleotide sequence ID" value="NC_011901.1"/>
</dbReference>
<dbReference type="SMR" id="B8GN38"/>
<dbReference type="STRING" id="396588.Tgr7_0808"/>
<dbReference type="KEGG" id="tgr:Tgr7_0808"/>
<dbReference type="eggNOG" id="COG0045">
    <property type="taxonomic scope" value="Bacteria"/>
</dbReference>
<dbReference type="HOGENOM" id="CLU_037430_0_2_6"/>
<dbReference type="OrthoDB" id="9802602at2"/>
<dbReference type="UniPathway" id="UPA00223">
    <property type="reaction ID" value="UER00999"/>
</dbReference>
<dbReference type="Proteomes" id="UP000002383">
    <property type="component" value="Chromosome"/>
</dbReference>
<dbReference type="GO" id="GO:0005829">
    <property type="term" value="C:cytosol"/>
    <property type="evidence" value="ECO:0007669"/>
    <property type="project" value="TreeGrafter"/>
</dbReference>
<dbReference type="GO" id="GO:0042709">
    <property type="term" value="C:succinate-CoA ligase complex"/>
    <property type="evidence" value="ECO:0007669"/>
    <property type="project" value="TreeGrafter"/>
</dbReference>
<dbReference type="GO" id="GO:0005524">
    <property type="term" value="F:ATP binding"/>
    <property type="evidence" value="ECO:0007669"/>
    <property type="project" value="UniProtKB-UniRule"/>
</dbReference>
<dbReference type="GO" id="GO:0000287">
    <property type="term" value="F:magnesium ion binding"/>
    <property type="evidence" value="ECO:0007669"/>
    <property type="project" value="UniProtKB-UniRule"/>
</dbReference>
<dbReference type="GO" id="GO:0004775">
    <property type="term" value="F:succinate-CoA ligase (ADP-forming) activity"/>
    <property type="evidence" value="ECO:0007669"/>
    <property type="project" value="UniProtKB-UniRule"/>
</dbReference>
<dbReference type="GO" id="GO:0004776">
    <property type="term" value="F:succinate-CoA ligase (GDP-forming) activity"/>
    <property type="evidence" value="ECO:0007669"/>
    <property type="project" value="RHEA"/>
</dbReference>
<dbReference type="GO" id="GO:0006104">
    <property type="term" value="P:succinyl-CoA metabolic process"/>
    <property type="evidence" value="ECO:0007669"/>
    <property type="project" value="TreeGrafter"/>
</dbReference>
<dbReference type="GO" id="GO:0006099">
    <property type="term" value="P:tricarboxylic acid cycle"/>
    <property type="evidence" value="ECO:0007669"/>
    <property type="project" value="UniProtKB-UniRule"/>
</dbReference>
<dbReference type="FunFam" id="3.30.1490.20:FF:000002">
    <property type="entry name" value="Succinate--CoA ligase [ADP-forming] subunit beta"/>
    <property type="match status" value="1"/>
</dbReference>
<dbReference type="FunFam" id="3.30.470.20:FF:000002">
    <property type="entry name" value="Succinate--CoA ligase [ADP-forming] subunit beta"/>
    <property type="match status" value="1"/>
</dbReference>
<dbReference type="FunFam" id="3.40.50.261:FF:000001">
    <property type="entry name" value="Succinate--CoA ligase [ADP-forming] subunit beta"/>
    <property type="match status" value="1"/>
</dbReference>
<dbReference type="Gene3D" id="3.30.1490.20">
    <property type="entry name" value="ATP-grasp fold, A domain"/>
    <property type="match status" value="1"/>
</dbReference>
<dbReference type="Gene3D" id="3.30.470.20">
    <property type="entry name" value="ATP-grasp fold, B domain"/>
    <property type="match status" value="1"/>
</dbReference>
<dbReference type="Gene3D" id="3.40.50.261">
    <property type="entry name" value="Succinyl-CoA synthetase domains"/>
    <property type="match status" value="1"/>
</dbReference>
<dbReference type="HAMAP" id="MF_00558">
    <property type="entry name" value="Succ_CoA_beta"/>
    <property type="match status" value="1"/>
</dbReference>
<dbReference type="InterPro" id="IPR011761">
    <property type="entry name" value="ATP-grasp"/>
</dbReference>
<dbReference type="InterPro" id="IPR013650">
    <property type="entry name" value="ATP-grasp_succ-CoA_synth-type"/>
</dbReference>
<dbReference type="InterPro" id="IPR013815">
    <property type="entry name" value="ATP_grasp_subdomain_1"/>
</dbReference>
<dbReference type="InterPro" id="IPR017866">
    <property type="entry name" value="Succ-CoA_synthase_bsu_CS"/>
</dbReference>
<dbReference type="InterPro" id="IPR005811">
    <property type="entry name" value="SUCC_ACL_C"/>
</dbReference>
<dbReference type="InterPro" id="IPR005809">
    <property type="entry name" value="Succ_CoA_ligase-like_bsu"/>
</dbReference>
<dbReference type="InterPro" id="IPR016102">
    <property type="entry name" value="Succinyl-CoA_synth-like"/>
</dbReference>
<dbReference type="NCBIfam" id="NF001913">
    <property type="entry name" value="PRK00696.1"/>
    <property type="match status" value="1"/>
</dbReference>
<dbReference type="NCBIfam" id="TIGR01016">
    <property type="entry name" value="sucCoAbeta"/>
    <property type="match status" value="1"/>
</dbReference>
<dbReference type="PANTHER" id="PTHR11815:SF10">
    <property type="entry name" value="SUCCINATE--COA LIGASE [GDP-FORMING] SUBUNIT BETA, MITOCHONDRIAL"/>
    <property type="match status" value="1"/>
</dbReference>
<dbReference type="PANTHER" id="PTHR11815">
    <property type="entry name" value="SUCCINYL-COA SYNTHETASE BETA CHAIN"/>
    <property type="match status" value="1"/>
</dbReference>
<dbReference type="Pfam" id="PF08442">
    <property type="entry name" value="ATP-grasp_2"/>
    <property type="match status" value="1"/>
</dbReference>
<dbReference type="Pfam" id="PF00549">
    <property type="entry name" value="Ligase_CoA"/>
    <property type="match status" value="1"/>
</dbReference>
<dbReference type="PIRSF" id="PIRSF001554">
    <property type="entry name" value="SucCS_beta"/>
    <property type="match status" value="1"/>
</dbReference>
<dbReference type="SUPFAM" id="SSF56059">
    <property type="entry name" value="Glutathione synthetase ATP-binding domain-like"/>
    <property type="match status" value="1"/>
</dbReference>
<dbReference type="SUPFAM" id="SSF52210">
    <property type="entry name" value="Succinyl-CoA synthetase domains"/>
    <property type="match status" value="1"/>
</dbReference>
<dbReference type="PROSITE" id="PS50975">
    <property type="entry name" value="ATP_GRASP"/>
    <property type="match status" value="1"/>
</dbReference>
<dbReference type="PROSITE" id="PS01217">
    <property type="entry name" value="SUCCINYL_COA_LIG_3"/>
    <property type="match status" value="1"/>
</dbReference>
<feature type="chain" id="PRO_1000197717" description="Succinate--CoA ligase [ADP-forming] subunit beta">
    <location>
        <begin position="1"/>
        <end position="386"/>
    </location>
</feature>
<feature type="domain" description="ATP-grasp" evidence="1">
    <location>
        <begin position="9"/>
        <end position="244"/>
    </location>
</feature>
<feature type="binding site" evidence="1">
    <location>
        <position position="46"/>
    </location>
    <ligand>
        <name>ATP</name>
        <dbReference type="ChEBI" id="CHEBI:30616"/>
    </ligand>
</feature>
<feature type="binding site" evidence="1">
    <location>
        <begin position="53"/>
        <end position="55"/>
    </location>
    <ligand>
        <name>ATP</name>
        <dbReference type="ChEBI" id="CHEBI:30616"/>
    </ligand>
</feature>
<feature type="binding site" evidence="1">
    <location>
        <position position="99"/>
    </location>
    <ligand>
        <name>ATP</name>
        <dbReference type="ChEBI" id="CHEBI:30616"/>
    </ligand>
</feature>
<feature type="binding site" evidence="1">
    <location>
        <position position="102"/>
    </location>
    <ligand>
        <name>ATP</name>
        <dbReference type="ChEBI" id="CHEBI:30616"/>
    </ligand>
</feature>
<feature type="binding site" evidence="1">
    <location>
        <position position="107"/>
    </location>
    <ligand>
        <name>ATP</name>
        <dbReference type="ChEBI" id="CHEBI:30616"/>
    </ligand>
</feature>
<feature type="binding site" evidence="1">
    <location>
        <position position="199"/>
    </location>
    <ligand>
        <name>Mg(2+)</name>
        <dbReference type="ChEBI" id="CHEBI:18420"/>
    </ligand>
</feature>
<feature type="binding site" evidence="1">
    <location>
        <position position="213"/>
    </location>
    <ligand>
        <name>Mg(2+)</name>
        <dbReference type="ChEBI" id="CHEBI:18420"/>
    </ligand>
</feature>
<feature type="binding site" evidence="1">
    <location>
        <position position="264"/>
    </location>
    <ligand>
        <name>substrate</name>
        <note>ligand shared with subunit alpha</note>
    </ligand>
</feature>
<feature type="binding site" evidence="1">
    <location>
        <begin position="321"/>
        <end position="323"/>
    </location>
    <ligand>
        <name>substrate</name>
        <note>ligand shared with subunit alpha</note>
    </ligand>
</feature>